<evidence type="ECO:0000255" key="1">
    <source>
        <dbReference type="HAMAP-Rule" id="MF_02007"/>
    </source>
</evidence>
<sequence>MTPEEQVKILKRNVVDLISEEELLDRIKRKGKLRVKLGVDPSRPDLHLGHAVVLRKLREFQDLGHTVVLIIGDFTARIGDPSGRNETRPMLTKEEVLENAKTYQEQAFKILDPKRTELRFNGEWLDRMTFADVIILASKYTVARMLERDDFAKRFKEGIPIAISEFLYPLAQAYDSVAIQSDVELGGTDQLFNLLVGRKIQEEYGQEPQIVMTMPIIEGTDGKLKMSKSYGNYIAFNDPPEEMYGKLMSIPDELIIKYMRLLTDIPEERIEEYERKMKEKTINPRDVKMVLAYEITRFFHGEENAKKAQEHFVKVFQKKEIPDEMPVVEISQEKNIVDLLVEIGAASSKSEAKRLVSQGGVYIDGERIEDIKFTVEPDGERVLRVGKRKFYRISGGETKKL</sequence>
<organism>
    <name type="scientific">Thermotoga maritima (strain ATCC 43589 / DSM 3109 / JCM 10099 / NBRC 100826 / MSB8)</name>
    <dbReference type="NCBI Taxonomy" id="243274"/>
    <lineage>
        <taxon>Bacteria</taxon>
        <taxon>Thermotogati</taxon>
        <taxon>Thermotogota</taxon>
        <taxon>Thermotogae</taxon>
        <taxon>Thermotogales</taxon>
        <taxon>Thermotogaceae</taxon>
        <taxon>Thermotoga</taxon>
    </lineage>
</organism>
<feature type="chain" id="PRO_0000236771" description="Tyrosine--tRNA ligase">
    <location>
        <begin position="1"/>
        <end position="401"/>
    </location>
</feature>
<feature type="domain" description="S4 RNA-binding" evidence="1">
    <location>
        <begin position="334"/>
        <end position="395"/>
    </location>
</feature>
<feature type="short sequence motif" description="'HIGH' region">
    <location>
        <begin position="41"/>
        <end position="50"/>
    </location>
</feature>
<feature type="short sequence motif" description="'KMSKS' region">
    <location>
        <begin position="225"/>
        <end position="229"/>
    </location>
</feature>
<feature type="binding site" evidence="1">
    <location>
        <position position="228"/>
    </location>
    <ligand>
        <name>ATP</name>
        <dbReference type="ChEBI" id="CHEBI:30616"/>
    </ligand>
</feature>
<reference key="1">
    <citation type="journal article" date="1999" name="Nature">
        <title>Evidence for lateral gene transfer between Archaea and Bacteria from genome sequence of Thermotoga maritima.</title>
        <authorList>
            <person name="Nelson K.E."/>
            <person name="Clayton R.A."/>
            <person name="Gill S.R."/>
            <person name="Gwinn M.L."/>
            <person name="Dodson R.J."/>
            <person name="Haft D.H."/>
            <person name="Hickey E.K."/>
            <person name="Peterson J.D."/>
            <person name="Nelson W.C."/>
            <person name="Ketchum K.A."/>
            <person name="McDonald L.A."/>
            <person name="Utterback T.R."/>
            <person name="Malek J.A."/>
            <person name="Linher K.D."/>
            <person name="Garrett M.M."/>
            <person name="Stewart A.M."/>
            <person name="Cotton M.D."/>
            <person name="Pratt M.S."/>
            <person name="Phillips C.A."/>
            <person name="Richardson D.L."/>
            <person name="Heidelberg J.F."/>
            <person name="Sutton G.G."/>
            <person name="Fleischmann R.D."/>
            <person name="Eisen J.A."/>
            <person name="White O."/>
            <person name="Salzberg S.L."/>
            <person name="Smith H.O."/>
            <person name="Venter J.C."/>
            <person name="Fraser C.M."/>
        </authorList>
    </citation>
    <scope>NUCLEOTIDE SEQUENCE [LARGE SCALE GENOMIC DNA]</scope>
    <source>
        <strain>ATCC 43589 / DSM 3109 / JCM 10099 / NBRC 100826 / MSB8</strain>
    </source>
</reference>
<accession>Q9WYU8</accession>
<dbReference type="EC" id="6.1.1.1" evidence="1"/>
<dbReference type="EMBL" id="AE000512">
    <property type="protein sequence ID" value="AAD35566.1"/>
    <property type="molecule type" value="Genomic_DNA"/>
</dbReference>
<dbReference type="PIR" id="F72372">
    <property type="entry name" value="F72372"/>
</dbReference>
<dbReference type="RefSeq" id="NP_228288.1">
    <property type="nucleotide sequence ID" value="NC_000853.1"/>
</dbReference>
<dbReference type="RefSeq" id="WP_004081488.1">
    <property type="nucleotide sequence ID" value="NC_000853.1"/>
</dbReference>
<dbReference type="SMR" id="Q9WYU8"/>
<dbReference type="FunCoup" id="Q9WYU8">
    <property type="interactions" value="66"/>
</dbReference>
<dbReference type="STRING" id="243274.TM_0478"/>
<dbReference type="PaxDb" id="243274-THEMA_02295"/>
<dbReference type="EnsemblBacteria" id="AAD35566">
    <property type="protein sequence ID" value="AAD35566"/>
    <property type="gene ID" value="TM_0478"/>
</dbReference>
<dbReference type="KEGG" id="tma:TM0478"/>
<dbReference type="KEGG" id="tmi:THEMA_02295"/>
<dbReference type="KEGG" id="tmm:Tmari_0475"/>
<dbReference type="KEGG" id="tmw:THMA_0488"/>
<dbReference type="eggNOG" id="COG0162">
    <property type="taxonomic scope" value="Bacteria"/>
</dbReference>
<dbReference type="InParanoid" id="Q9WYU8"/>
<dbReference type="OrthoDB" id="9804243at2"/>
<dbReference type="Proteomes" id="UP000008183">
    <property type="component" value="Chromosome"/>
</dbReference>
<dbReference type="GO" id="GO:0005829">
    <property type="term" value="C:cytosol"/>
    <property type="evidence" value="ECO:0000318"/>
    <property type="project" value="GO_Central"/>
</dbReference>
<dbReference type="GO" id="GO:0005524">
    <property type="term" value="F:ATP binding"/>
    <property type="evidence" value="ECO:0007669"/>
    <property type="project" value="UniProtKB-UniRule"/>
</dbReference>
<dbReference type="GO" id="GO:0003723">
    <property type="term" value="F:RNA binding"/>
    <property type="evidence" value="ECO:0007669"/>
    <property type="project" value="UniProtKB-KW"/>
</dbReference>
<dbReference type="GO" id="GO:0004831">
    <property type="term" value="F:tyrosine-tRNA ligase activity"/>
    <property type="evidence" value="ECO:0000318"/>
    <property type="project" value="GO_Central"/>
</dbReference>
<dbReference type="GO" id="GO:0043039">
    <property type="term" value="P:tRNA aminoacylation"/>
    <property type="evidence" value="ECO:0000318"/>
    <property type="project" value="GO_Central"/>
</dbReference>
<dbReference type="GO" id="GO:0006437">
    <property type="term" value="P:tyrosyl-tRNA aminoacylation"/>
    <property type="evidence" value="ECO:0007669"/>
    <property type="project" value="UniProtKB-UniRule"/>
</dbReference>
<dbReference type="CDD" id="cd00165">
    <property type="entry name" value="S4"/>
    <property type="match status" value="1"/>
</dbReference>
<dbReference type="CDD" id="cd00805">
    <property type="entry name" value="TyrRS_core"/>
    <property type="match status" value="1"/>
</dbReference>
<dbReference type="FunFam" id="1.10.240.10:FF:000006">
    <property type="entry name" value="Tyrosine--tRNA ligase"/>
    <property type="match status" value="1"/>
</dbReference>
<dbReference type="FunFam" id="3.10.290.10:FF:000022">
    <property type="entry name" value="Tyrosine--tRNA ligase"/>
    <property type="match status" value="1"/>
</dbReference>
<dbReference type="FunFam" id="3.40.50.620:FF:000061">
    <property type="entry name" value="Tyrosine--tRNA ligase"/>
    <property type="match status" value="1"/>
</dbReference>
<dbReference type="Gene3D" id="3.40.50.620">
    <property type="entry name" value="HUPs"/>
    <property type="match status" value="1"/>
</dbReference>
<dbReference type="Gene3D" id="3.10.290.10">
    <property type="entry name" value="RNA-binding S4 domain"/>
    <property type="match status" value="1"/>
</dbReference>
<dbReference type="Gene3D" id="1.10.240.10">
    <property type="entry name" value="Tyrosyl-Transfer RNA Synthetase"/>
    <property type="match status" value="1"/>
</dbReference>
<dbReference type="HAMAP" id="MF_02007">
    <property type="entry name" value="Tyr_tRNA_synth_type2"/>
    <property type="match status" value="1"/>
</dbReference>
<dbReference type="InterPro" id="IPR002305">
    <property type="entry name" value="aa-tRNA-synth_Ic"/>
</dbReference>
<dbReference type="InterPro" id="IPR014729">
    <property type="entry name" value="Rossmann-like_a/b/a_fold"/>
</dbReference>
<dbReference type="InterPro" id="IPR002942">
    <property type="entry name" value="S4_RNA-bd"/>
</dbReference>
<dbReference type="InterPro" id="IPR036986">
    <property type="entry name" value="S4_RNA-bd_sf"/>
</dbReference>
<dbReference type="InterPro" id="IPR054608">
    <property type="entry name" value="SYY-like_C"/>
</dbReference>
<dbReference type="InterPro" id="IPR002307">
    <property type="entry name" value="Tyr-tRNA-ligase"/>
</dbReference>
<dbReference type="InterPro" id="IPR024088">
    <property type="entry name" value="Tyr-tRNA-ligase_bac-type"/>
</dbReference>
<dbReference type="InterPro" id="IPR024108">
    <property type="entry name" value="Tyr-tRNA-ligase_bac_2"/>
</dbReference>
<dbReference type="NCBIfam" id="TIGR00234">
    <property type="entry name" value="tyrS"/>
    <property type="match status" value="1"/>
</dbReference>
<dbReference type="PANTHER" id="PTHR11766:SF1">
    <property type="entry name" value="TYROSINE--TRNA LIGASE"/>
    <property type="match status" value="1"/>
</dbReference>
<dbReference type="PANTHER" id="PTHR11766">
    <property type="entry name" value="TYROSYL-TRNA SYNTHETASE"/>
    <property type="match status" value="1"/>
</dbReference>
<dbReference type="Pfam" id="PF22421">
    <property type="entry name" value="SYY_C-terminal"/>
    <property type="match status" value="1"/>
</dbReference>
<dbReference type="Pfam" id="PF00579">
    <property type="entry name" value="tRNA-synt_1b"/>
    <property type="match status" value="1"/>
</dbReference>
<dbReference type="PRINTS" id="PR01040">
    <property type="entry name" value="TRNASYNTHTYR"/>
</dbReference>
<dbReference type="SMART" id="SM00363">
    <property type="entry name" value="S4"/>
    <property type="match status" value="1"/>
</dbReference>
<dbReference type="SUPFAM" id="SSF55174">
    <property type="entry name" value="Alpha-L RNA-binding motif"/>
    <property type="match status" value="1"/>
</dbReference>
<dbReference type="SUPFAM" id="SSF52374">
    <property type="entry name" value="Nucleotidylyl transferase"/>
    <property type="match status" value="1"/>
</dbReference>
<dbReference type="PROSITE" id="PS50889">
    <property type="entry name" value="S4"/>
    <property type="match status" value="1"/>
</dbReference>
<proteinExistence type="inferred from homology"/>
<name>SYY_THEMA</name>
<gene>
    <name evidence="1" type="primary">tyrS</name>
    <name type="ordered locus">TM_0478</name>
</gene>
<keyword id="KW-0030">Aminoacyl-tRNA synthetase</keyword>
<keyword id="KW-0067">ATP-binding</keyword>
<keyword id="KW-0963">Cytoplasm</keyword>
<keyword id="KW-0436">Ligase</keyword>
<keyword id="KW-0547">Nucleotide-binding</keyword>
<keyword id="KW-0648">Protein biosynthesis</keyword>
<keyword id="KW-1185">Reference proteome</keyword>
<keyword id="KW-0694">RNA-binding</keyword>
<comment type="function">
    <text evidence="1">Catalyzes the attachment of tyrosine to tRNA(Tyr) in a two-step reaction: tyrosine is first activated by ATP to form Tyr-AMP and then transferred to the acceptor end of tRNA(Tyr).</text>
</comment>
<comment type="catalytic activity">
    <reaction evidence="1">
        <text>tRNA(Tyr) + L-tyrosine + ATP = L-tyrosyl-tRNA(Tyr) + AMP + diphosphate + H(+)</text>
        <dbReference type="Rhea" id="RHEA:10220"/>
        <dbReference type="Rhea" id="RHEA-COMP:9706"/>
        <dbReference type="Rhea" id="RHEA-COMP:9707"/>
        <dbReference type="ChEBI" id="CHEBI:15378"/>
        <dbReference type="ChEBI" id="CHEBI:30616"/>
        <dbReference type="ChEBI" id="CHEBI:33019"/>
        <dbReference type="ChEBI" id="CHEBI:58315"/>
        <dbReference type="ChEBI" id="CHEBI:78442"/>
        <dbReference type="ChEBI" id="CHEBI:78536"/>
        <dbReference type="ChEBI" id="CHEBI:456215"/>
        <dbReference type="EC" id="6.1.1.1"/>
    </reaction>
</comment>
<comment type="subunit">
    <text evidence="1">Homodimer.</text>
</comment>
<comment type="subcellular location">
    <subcellularLocation>
        <location evidence="1">Cytoplasm</location>
    </subcellularLocation>
</comment>
<comment type="similarity">
    <text evidence="1">Belongs to the class-I aminoacyl-tRNA synthetase family. TyrS type 2 subfamily.</text>
</comment>
<protein>
    <recommendedName>
        <fullName evidence="1">Tyrosine--tRNA ligase</fullName>
        <ecNumber evidence="1">6.1.1.1</ecNumber>
    </recommendedName>
    <alternativeName>
        <fullName evidence="1">Tyrosyl-tRNA synthetase</fullName>
        <shortName evidence="1">TyrRS</shortName>
    </alternativeName>
</protein>